<dbReference type="EMBL" id="AF226278">
    <property type="protein sequence ID" value="AAF73900.1"/>
    <property type="molecule type" value="Genomic_DNA"/>
</dbReference>
<dbReference type="EMBL" id="AM040265">
    <property type="protein sequence ID" value="CAJ12228.1"/>
    <property type="molecule type" value="Genomic_DNA"/>
</dbReference>
<dbReference type="RefSeq" id="WP_002966516.1">
    <property type="nucleotide sequence ID" value="NZ_KN046823.1"/>
</dbReference>
<dbReference type="STRING" id="359391.BAB2_0062"/>
<dbReference type="KEGG" id="bmf:BAB2_0062"/>
<dbReference type="HOGENOM" id="CLU_211045_0_0_5"/>
<dbReference type="BioCyc" id="MetaCyc:BAB_RS26655-MONOMER"/>
<dbReference type="Proteomes" id="UP000002719">
    <property type="component" value="Chromosome II"/>
</dbReference>
<dbReference type="GO" id="GO:0005886">
    <property type="term" value="C:plasma membrane"/>
    <property type="evidence" value="ECO:0007669"/>
    <property type="project" value="UniProtKB-SubCell"/>
</dbReference>
<dbReference type="InterPro" id="IPR012640">
    <property type="entry name" value="Membr_lipoprot_lipid_attach_CS"/>
</dbReference>
<dbReference type="Pfam" id="PF08139">
    <property type="entry name" value="LPAM_1"/>
    <property type="match status" value="1"/>
</dbReference>
<dbReference type="PROSITE" id="PS51257">
    <property type="entry name" value="PROKAR_LIPOPROTEIN"/>
    <property type="match status" value="1"/>
</dbReference>
<gene>
    <name type="primary">virB7</name>
    <name type="ordered locus">BAB2_0062</name>
</gene>
<organism>
    <name type="scientific">Brucella abortus (strain 2308)</name>
    <dbReference type="NCBI Taxonomy" id="359391"/>
    <lineage>
        <taxon>Bacteria</taxon>
        <taxon>Pseudomonadati</taxon>
        <taxon>Pseudomonadota</taxon>
        <taxon>Alphaproteobacteria</taxon>
        <taxon>Hyphomicrobiales</taxon>
        <taxon>Brucellaceae</taxon>
        <taxon>Brucella/Ochrobactrum group</taxon>
        <taxon>Brucella</taxon>
    </lineage>
</organism>
<comment type="function">
    <text evidence="3">The virB operon is essential for intracellular survival and is not involved in the invasion process. Constitutes a major determinant of virulence in mice.</text>
</comment>
<comment type="subcellular location">
    <subcellularLocation>
        <location evidence="1">Cell membrane</location>
        <topology evidence="1">Lipid-anchor</topology>
    </subcellularLocation>
</comment>
<comment type="miscellaneous">
    <text>Transcription is turned on at the beginning of the stationary phase of vegetative growth.</text>
</comment>
<name>VIRB7_BRUA2</name>
<feature type="signal peptide" evidence="1">
    <location>
        <begin position="1"/>
        <end position="16"/>
    </location>
</feature>
<feature type="chain" id="PRO_0000291440" description="Type IV secretion system putative lipoprotein virB7">
    <location>
        <begin position="17"/>
        <end position="57"/>
    </location>
</feature>
<feature type="region of interest" description="Disordered" evidence="2">
    <location>
        <begin position="35"/>
        <end position="57"/>
    </location>
</feature>
<feature type="lipid moiety-binding region" description="N-palmitoyl cysteine" evidence="1">
    <location>
        <position position="17"/>
    </location>
</feature>
<feature type="lipid moiety-binding region" description="S-diacylglycerol cysteine" evidence="1">
    <location>
        <position position="17"/>
    </location>
</feature>
<proteinExistence type="inferred from homology"/>
<evidence type="ECO:0000255" key="1">
    <source>
        <dbReference type="PROSITE-ProRule" id="PRU00303"/>
    </source>
</evidence>
<evidence type="ECO:0000256" key="2">
    <source>
        <dbReference type="SAM" id="MobiDB-lite"/>
    </source>
</evidence>
<evidence type="ECO:0000269" key="3">
    <source>
    </source>
</evidence>
<protein>
    <recommendedName>
        <fullName>Type IV secretion system putative lipoprotein virB7</fullName>
    </recommendedName>
</protein>
<sequence>MKKVILAFVATAFLAGCTTTGPAVVPVLDGKPRVPVNKSVPAKPPLAQPNPVDTYED</sequence>
<accession>Q2YJ77</accession>
<accession>Q57A20</accession>
<accession>Q7BMZ7</accession>
<reference key="1">
    <citation type="journal article" date="2000" name="J. Bacteriol.">
        <title>A homologue of an operon required for DNA transfer in Agrobacterium is required in Brucella abortus for virulence and intracellular multiplication.</title>
        <authorList>
            <person name="Sieira R."/>
            <person name="Comerci D.J."/>
            <person name="Sanchez D.O."/>
            <person name="Ugalde R.A."/>
        </authorList>
    </citation>
    <scope>NUCLEOTIDE SEQUENCE [GENOMIC DNA]</scope>
    <scope>TRANSCRIPTION</scope>
    <scope>FUNCTION</scope>
</reference>
<reference key="2">
    <citation type="journal article" date="2005" name="Infect. Immun.">
        <title>Whole-genome analyses of speciation events in pathogenic Brucellae.</title>
        <authorList>
            <person name="Chain P.S."/>
            <person name="Comerci D.J."/>
            <person name="Tolmasky M.E."/>
            <person name="Larimer F.W."/>
            <person name="Malfatti S.A."/>
            <person name="Vergez L.M."/>
            <person name="Aguero F."/>
            <person name="Land M.L."/>
            <person name="Ugalde R.A."/>
            <person name="Garcia E."/>
        </authorList>
    </citation>
    <scope>NUCLEOTIDE SEQUENCE [LARGE SCALE GENOMIC DNA]</scope>
    <source>
        <strain>2308</strain>
    </source>
</reference>
<keyword id="KW-1003">Cell membrane</keyword>
<keyword id="KW-0449">Lipoprotein</keyword>
<keyword id="KW-0472">Membrane</keyword>
<keyword id="KW-0564">Palmitate</keyword>
<keyword id="KW-1185">Reference proteome</keyword>
<keyword id="KW-0732">Signal</keyword>
<keyword id="KW-0843">Virulence</keyword>